<accession>Q720K7</accession>
<reference key="1">
    <citation type="journal article" date="2004" name="Nucleic Acids Res.">
        <title>Whole genome comparisons of serotype 4b and 1/2a strains of the food-borne pathogen Listeria monocytogenes reveal new insights into the core genome components of this species.</title>
        <authorList>
            <person name="Nelson K.E."/>
            <person name="Fouts D.E."/>
            <person name="Mongodin E.F."/>
            <person name="Ravel J."/>
            <person name="DeBoy R.T."/>
            <person name="Kolonay J.F."/>
            <person name="Rasko D.A."/>
            <person name="Angiuoli S.V."/>
            <person name="Gill S.R."/>
            <person name="Paulsen I.T."/>
            <person name="Peterson J.D."/>
            <person name="White O."/>
            <person name="Nelson W.C."/>
            <person name="Nierman W.C."/>
            <person name="Beanan M.J."/>
            <person name="Brinkac L.M."/>
            <person name="Daugherty S.C."/>
            <person name="Dodson R.J."/>
            <person name="Durkin A.S."/>
            <person name="Madupu R."/>
            <person name="Haft D.H."/>
            <person name="Selengut J."/>
            <person name="Van Aken S.E."/>
            <person name="Khouri H.M."/>
            <person name="Fedorova N."/>
            <person name="Forberger H.A."/>
            <person name="Tran B."/>
            <person name="Kathariou S."/>
            <person name="Wonderling L.D."/>
            <person name="Uhlich G.A."/>
            <person name="Bayles D.O."/>
            <person name="Luchansky J.B."/>
            <person name="Fraser C.M."/>
        </authorList>
    </citation>
    <scope>NUCLEOTIDE SEQUENCE [LARGE SCALE GENOMIC DNA]</scope>
    <source>
        <strain>F2365</strain>
    </source>
</reference>
<name>SYFB_LISMF</name>
<gene>
    <name evidence="1" type="primary">pheT</name>
    <name type="ordered locus">LMOf2365_1231</name>
</gene>
<protein>
    <recommendedName>
        <fullName evidence="1">Phenylalanine--tRNA ligase beta subunit</fullName>
        <ecNumber evidence="1">6.1.1.20</ecNumber>
    </recommendedName>
    <alternativeName>
        <fullName evidence="1">Phenylalanyl-tRNA synthetase beta subunit</fullName>
        <shortName evidence="1">PheRS</shortName>
    </alternativeName>
</protein>
<dbReference type="EC" id="6.1.1.20" evidence="1"/>
<dbReference type="EMBL" id="AE017262">
    <property type="protein sequence ID" value="AAT04007.1"/>
    <property type="molecule type" value="Genomic_DNA"/>
</dbReference>
<dbReference type="RefSeq" id="WP_010958866.1">
    <property type="nucleotide sequence ID" value="NC_002973.6"/>
</dbReference>
<dbReference type="SMR" id="Q720K7"/>
<dbReference type="KEGG" id="lmf:LMOf2365_1231"/>
<dbReference type="HOGENOM" id="CLU_016891_0_0_9"/>
<dbReference type="GO" id="GO:0009328">
    <property type="term" value="C:phenylalanine-tRNA ligase complex"/>
    <property type="evidence" value="ECO:0007669"/>
    <property type="project" value="TreeGrafter"/>
</dbReference>
<dbReference type="GO" id="GO:0005524">
    <property type="term" value="F:ATP binding"/>
    <property type="evidence" value="ECO:0007669"/>
    <property type="project" value="UniProtKB-UniRule"/>
</dbReference>
<dbReference type="GO" id="GO:0140096">
    <property type="term" value="F:catalytic activity, acting on a protein"/>
    <property type="evidence" value="ECO:0007669"/>
    <property type="project" value="UniProtKB-ARBA"/>
</dbReference>
<dbReference type="GO" id="GO:0000287">
    <property type="term" value="F:magnesium ion binding"/>
    <property type="evidence" value="ECO:0007669"/>
    <property type="project" value="UniProtKB-UniRule"/>
</dbReference>
<dbReference type="GO" id="GO:0004826">
    <property type="term" value="F:phenylalanine-tRNA ligase activity"/>
    <property type="evidence" value="ECO:0007669"/>
    <property type="project" value="UniProtKB-UniRule"/>
</dbReference>
<dbReference type="GO" id="GO:0016740">
    <property type="term" value="F:transferase activity"/>
    <property type="evidence" value="ECO:0007669"/>
    <property type="project" value="UniProtKB-ARBA"/>
</dbReference>
<dbReference type="GO" id="GO:0000049">
    <property type="term" value="F:tRNA binding"/>
    <property type="evidence" value="ECO:0007669"/>
    <property type="project" value="UniProtKB-KW"/>
</dbReference>
<dbReference type="GO" id="GO:0006432">
    <property type="term" value="P:phenylalanyl-tRNA aminoacylation"/>
    <property type="evidence" value="ECO:0007669"/>
    <property type="project" value="UniProtKB-UniRule"/>
</dbReference>
<dbReference type="CDD" id="cd00769">
    <property type="entry name" value="PheRS_beta_core"/>
    <property type="match status" value="1"/>
</dbReference>
<dbReference type="CDD" id="cd02796">
    <property type="entry name" value="tRNA_bind_bactPheRS"/>
    <property type="match status" value="1"/>
</dbReference>
<dbReference type="FunFam" id="2.40.50.140:FF:000045">
    <property type="entry name" value="Phenylalanine--tRNA ligase beta subunit"/>
    <property type="match status" value="1"/>
</dbReference>
<dbReference type="FunFam" id="3.30.56.10:FF:000002">
    <property type="entry name" value="Phenylalanine--tRNA ligase beta subunit"/>
    <property type="match status" value="1"/>
</dbReference>
<dbReference type="FunFam" id="3.30.70.380:FF:000001">
    <property type="entry name" value="Phenylalanine--tRNA ligase beta subunit"/>
    <property type="match status" value="1"/>
</dbReference>
<dbReference type="FunFam" id="3.30.930.10:FF:000022">
    <property type="entry name" value="Phenylalanine--tRNA ligase beta subunit"/>
    <property type="match status" value="1"/>
</dbReference>
<dbReference type="FunFam" id="3.50.40.10:FF:000001">
    <property type="entry name" value="Phenylalanine--tRNA ligase beta subunit"/>
    <property type="match status" value="1"/>
</dbReference>
<dbReference type="Gene3D" id="3.30.56.10">
    <property type="match status" value="2"/>
</dbReference>
<dbReference type="Gene3D" id="3.30.930.10">
    <property type="entry name" value="Bira Bifunctional Protein, Domain 2"/>
    <property type="match status" value="1"/>
</dbReference>
<dbReference type="Gene3D" id="3.30.70.380">
    <property type="entry name" value="Ferrodoxin-fold anticodon-binding domain"/>
    <property type="match status" value="1"/>
</dbReference>
<dbReference type="Gene3D" id="2.40.50.140">
    <property type="entry name" value="Nucleic acid-binding proteins"/>
    <property type="match status" value="1"/>
</dbReference>
<dbReference type="Gene3D" id="3.50.40.10">
    <property type="entry name" value="Phenylalanyl-trna Synthetase, Chain B, domain 3"/>
    <property type="match status" value="1"/>
</dbReference>
<dbReference type="HAMAP" id="MF_00283">
    <property type="entry name" value="Phe_tRNA_synth_beta1"/>
    <property type="match status" value="1"/>
</dbReference>
<dbReference type="InterPro" id="IPR045864">
    <property type="entry name" value="aa-tRNA-synth_II/BPL/LPL"/>
</dbReference>
<dbReference type="InterPro" id="IPR005146">
    <property type="entry name" value="B3/B4_tRNA-bd"/>
</dbReference>
<dbReference type="InterPro" id="IPR009061">
    <property type="entry name" value="DNA-bd_dom_put_sf"/>
</dbReference>
<dbReference type="InterPro" id="IPR005121">
    <property type="entry name" value="Fdx_antiC-bd"/>
</dbReference>
<dbReference type="InterPro" id="IPR036690">
    <property type="entry name" value="Fdx_antiC-bd_sf"/>
</dbReference>
<dbReference type="InterPro" id="IPR012340">
    <property type="entry name" value="NA-bd_OB-fold"/>
</dbReference>
<dbReference type="InterPro" id="IPR045060">
    <property type="entry name" value="Phe-tRNA-ligase_IIc_bsu"/>
</dbReference>
<dbReference type="InterPro" id="IPR004532">
    <property type="entry name" value="Phe-tRNA-ligase_IIc_bsu_bact"/>
</dbReference>
<dbReference type="InterPro" id="IPR020825">
    <property type="entry name" value="Phe-tRNA_synthase-like_B3/B4"/>
</dbReference>
<dbReference type="InterPro" id="IPR041616">
    <property type="entry name" value="PheRS_beta_core"/>
</dbReference>
<dbReference type="InterPro" id="IPR002547">
    <property type="entry name" value="tRNA-bd_dom"/>
</dbReference>
<dbReference type="InterPro" id="IPR033714">
    <property type="entry name" value="tRNA_bind_bactPheRS"/>
</dbReference>
<dbReference type="InterPro" id="IPR005147">
    <property type="entry name" value="tRNA_synthase_B5-dom"/>
</dbReference>
<dbReference type="NCBIfam" id="TIGR00472">
    <property type="entry name" value="pheT_bact"/>
    <property type="match status" value="1"/>
</dbReference>
<dbReference type="NCBIfam" id="NF045760">
    <property type="entry name" value="YtpR"/>
    <property type="match status" value="1"/>
</dbReference>
<dbReference type="PANTHER" id="PTHR10947:SF0">
    <property type="entry name" value="PHENYLALANINE--TRNA LIGASE BETA SUBUNIT"/>
    <property type="match status" value="1"/>
</dbReference>
<dbReference type="PANTHER" id="PTHR10947">
    <property type="entry name" value="PHENYLALANYL-TRNA SYNTHETASE BETA CHAIN AND LEUCINE-RICH REPEAT-CONTAINING PROTEIN 47"/>
    <property type="match status" value="1"/>
</dbReference>
<dbReference type="Pfam" id="PF03483">
    <property type="entry name" value="B3_4"/>
    <property type="match status" value="1"/>
</dbReference>
<dbReference type="Pfam" id="PF03484">
    <property type="entry name" value="B5"/>
    <property type="match status" value="1"/>
</dbReference>
<dbReference type="Pfam" id="PF03147">
    <property type="entry name" value="FDX-ACB"/>
    <property type="match status" value="1"/>
</dbReference>
<dbReference type="Pfam" id="PF01588">
    <property type="entry name" value="tRNA_bind"/>
    <property type="match status" value="1"/>
</dbReference>
<dbReference type="Pfam" id="PF17759">
    <property type="entry name" value="tRNA_synthFbeta"/>
    <property type="match status" value="1"/>
</dbReference>
<dbReference type="SMART" id="SM00873">
    <property type="entry name" value="B3_4"/>
    <property type="match status" value="1"/>
</dbReference>
<dbReference type="SMART" id="SM00874">
    <property type="entry name" value="B5"/>
    <property type="match status" value="1"/>
</dbReference>
<dbReference type="SMART" id="SM00896">
    <property type="entry name" value="FDX-ACB"/>
    <property type="match status" value="1"/>
</dbReference>
<dbReference type="SUPFAM" id="SSF54991">
    <property type="entry name" value="Anticodon-binding domain of PheRS"/>
    <property type="match status" value="1"/>
</dbReference>
<dbReference type="SUPFAM" id="SSF55681">
    <property type="entry name" value="Class II aaRS and biotin synthetases"/>
    <property type="match status" value="1"/>
</dbReference>
<dbReference type="SUPFAM" id="SSF50249">
    <property type="entry name" value="Nucleic acid-binding proteins"/>
    <property type="match status" value="1"/>
</dbReference>
<dbReference type="SUPFAM" id="SSF56037">
    <property type="entry name" value="PheT/TilS domain"/>
    <property type="match status" value="1"/>
</dbReference>
<dbReference type="SUPFAM" id="SSF46955">
    <property type="entry name" value="Putative DNA-binding domain"/>
    <property type="match status" value="1"/>
</dbReference>
<dbReference type="PROSITE" id="PS51483">
    <property type="entry name" value="B5"/>
    <property type="match status" value="1"/>
</dbReference>
<dbReference type="PROSITE" id="PS51447">
    <property type="entry name" value="FDX_ACB"/>
    <property type="match status" value="1"/>
</dbReference>
<dbReference type="PROSITE" id="PS50886">
    <property type="entry name" value="TRBD"/>
    <property type="match status" value="1"/>
</dbReference>
<evidence type="ECO:0000255" key="1">
    <source>
        <dbReference type="HAMAP-Rule" id="MF_00283"/>
    </source>
</evidence>
<organism>
    <name type="scientific">Listeria monocytogenes serotype 4b (strain F2365)</name>
    <dbReference type="NCBI Taxonomy" id="265669"/>
    <lineage>
        <taxon>Bacteria</taxon>
        <taxon>Bacillati</taxon>
        <taxon>Bacillota</taxon>
        <taxon>Bacilli</taxon>
        <taxon>Bacillales</taxon>
        <taxon>Listeriaceae</taxon>
        <taxon>Listeria</taxon>
    </lineage>
</organism>
<comment type="catalytic activity">
    <reaction evidence="1">
        <text>tRNA(Phe) + L-phenylalanine + ATP = L-phenylalanyl-tRNA(Phe) + AMP + diphosphate + H(+)</text>
        <dbReference type="Rhea" id="RHEA:19413"/>
        <dbReference type="Rhea" id="RHEA-COMP:9668"/>
        <dbReference type="Rhea" id="RHEA-COMP:9699"/>
        <dbReference type="ChEBI" id="CHEBI:15378"/>
        <dbReference type="ChEBI" id="CHEBI:30616"/>
        <dbReference type="ChEBI" id="CHEBI:33019"/>
        <dbReference type="ChEBI" id="CHEBI:58095"/>
        <dbReference type="ChEBI" id="CHEBI:78442"/>
        <dbReference type="ChEBI" id="CHEBI:78531"/>
        <dbReference type="ChEBI" id="CHEBI:456215"/>
        <dbReference type="EC" id="6.1.1.20"/>
    </reaction>
</comment>
<comment type="cofactor">
    <cofactor evidence="1">
        <name>Mg(2+)</name>
        <dbReference type="ChEBI" id="CHEBI:18420"/>
    </cofactor>
    <text evidence="1">Binds 2 magnesium ions per tetramer.</text>
</comment>
<comment type="subunit">
    <text evidence="1">Tetramer of two alpha and two beta subunits.</text>
</comment>
<comment type="subcellular location">
    <subcellularLocation>
        <location evidence="1">Cytoplasm</location>
    </subcellularLocation>
</comment>
<comment type="similarity">
    <text evidence="1">Belongs to the phenylalanyl-tRNA synthetase beta subunit family. Type 1 subfamily.</text>
</comment>
<keyword id="KW-0030">Aminoacyl-tRNA synthetase</keyword>
<keyword id="KW-0067">ATP-binding</keyword>
<keyword id="KW-0963">Cytoplasm</keyword>
<keyword id="KW-0436">Ligase</keyword>
<keyword id="KW-0460">Magnesium</keyword>
<keyword id="KW-0479">Metal-binding</keyword>
<keyword id="KW-0547">Nucleotide-binding</keyword>
<keyword id="KW-0648">Protein biosynthesis</keyword>
<keyword id="KW-0694">RNA-binding</keyword>
<keyword id="KW-0820">tRNA-binding</keyword>
<sequence>MLVSYNWVKEFFQDFPLTAEELGEAITRTGIEIEGVEELSASLKNVVVGEVLSCERHPDAEKLNKCLVQTDETEPVQIICGAPNVAAGQKVIVAKVGARLPGGLKIKRAKLRGEVSEGMICSLAELGFESKVVPKAYAEGIYVLPAHVETGVSAITLLGLDDAILDMAITPNRADALSMNGVAHEVGAIIHQKPAQPTEPDVSEKGKADDFISVEVENPAETPYYAIKMVENIEIKESPLWLQTKLMKAGIRPHNNVVDVTNYINLLYGQPLHSFDYDKIGSKKIVVRSAKEQEEITTLDGEKRTLQAGHTVITNGVEPIAIAGVMGGEFSEVTENTTTVALEGAIFSSSSIGKASRELYLRTEASIRYDKGSDAWKVEKALAHGGALIAELSGGTLVGGVVEVDNREKAVNKIETSLTRINRILGTAITLAEIETIFDRLGFVLEVKNDALIIEVPTRRWDITIEADILEEVARIYGYDEIPVTLPATSTTGGLSDSQKARRVMRAYLEGAGLNQALTYSLTSKKDATRLALSDEKTVALSMPMSEEHSHLRTSIVPQLIRSASYNIARKNMDVALYEMGTVFYATEGDNLPIEQEHLAGLITGNWHTIDWQKTPKPVDFFVLKGIVEGLVNKLGIKSELHWKQTEKEELHPGRTASLILEGQEIGYLGALHPAVEANYDLKETYVFEINVAALLDATKEKVVYHPIPRYPEMTRDLALLVDKNTDHATISQVIQEHGGKLLVDIELFDIFEGESIGENKKSLAYTLTFLDSERTLVEEDVQKATNKVIEALQEKLHAIIR</sequence>
<proteinExistence type="inferred from homology"/>
<feature type="chain" id="PRO_0000126907" description="Phenylalanine--tRNA ligase beta subunit">
    <location>
        <begin position="1"/>
        <end position="802"/>
    </location>
</feature>
<feature type="domain" description="tRNA-binding" evidence="1">
    <location>
        <begin position="40"/>
        <end position="155"/>
    </location>
</feature>
<feature type="domain" description="B5" evidence="1">
    <location>
        <begin position="409"/>
        <end position="484"/>
    </location>
</feature>
<feature type="domain" description="FDX-ACB" evidence="1">
    <location>
        <begin position="709"/>
        <end position="802"/>
    </location>
</feature>
<feature type="binding site" evidence="1">
    <location>
        <position position="462"/>
    </location>
    <ligand>
        <name>Mg(2+)</name>
        <dbReference type="ChEBI" id="CHEBI:18420"/>
        <note>shared with alpha subunit</note>
    </ligand>
</feature>
<feature type="binding site" evidence="1">
    <location>
        <position position="468"/>
    </location>
    <ligand>
        <name>Mg(2+)</name>
        <dbReference type="ChEBI" id="CHEBI:18420"/>
        <note>shared with alpha subunit</note>
    </ligand>
</feature>
<feature type="binding site" evidence="1">
    <location>
        <position position="471"/>
    </location>
    <ligand>
        <name>Mg(2+)</name>
        <dbReference type="ChEBI" id="CHEBI:18420"/>
        <note>shared with alpha subunit</note>
    </ligand>
</feature>
<feature type="binding site" evidence="1">
    <location>
        <position position="472"/>
    </location>
    <ligand>
        <name>Mg(2+)</name>
        <dbReference type="ChEBI" id="CHEBI:18420"/>
        <note>shared with alpha subunit</note>
    </ligand>
</feature>